<proteinExistence type="evidence at protein level"/>
<organism>
    <name type="scientific">Homo sapiens</name>
    <name type="common">Human</name>
    <dbReference type="NCBI Taxonomy" id="9606"/>
    <lineage>
        <taxon>Eukaryota</taxon>
        <taxon>Metazoa</taxon>
        <taxon>Chordata</taxon>
        <taxon>Craniata</taxon>
        <taxon>Vertebrata</taxon>
        <taxon>Euteleostomi</taxon>
        <taxon>Mammalia</taxon>
        <taxon>Eutheria</taxon>
        <taxon>Euarchontoglires</taxon>
        <taxon>Primates</taxon>
        <taxon>Haplorrhini</taxon>
        <taxon>Catarrhini</taxon>
        <taxon>Hominidae</taxon>
        <taxon>Homo</taxon>
    </lineage>
</organism>
<comment type="function">
    <text>Could play a role in phagocytic activities of tissue macrophages, both in intracellular lysosomal metabolism and extracellular cell-cell and cell-pathogen interactions. Binds to tissue- and organ-specific lectins or selectins, allowing homing of macrophage subsets to particular sites. Rapid recirculation of CD68 from endosomes and lysosomes to the plasma membrane may allow macrophages to crawl over selectin-bearing substrates or other cells.</text>
</comment>
<comment type="interaction">
    <interactant intactId="EBI-2826276">
        <id>P34810</id>
    </interactant>
    <interactant intactId="EBI-712648">
        <id>O95994</id>
        <label>AGR2</label>
    </interactant>
    <organismsDiffer>false</organismsDiffer>
    <experiments>3</experiments>
</comment>
<comment type="interaction">
    <interactant intactId="EBI-2826276">
        <id>P34810</id>
    </interactant>
    <interactant intactId="EBI-13059134">
        <id>Q13520</id>
        <label>AQP6</label>
    </interactant>
    <organismsDiffer>false</organismsDiffer>
    <experiments>3</experiments>
</comment>
<comment type="interaction">
    <interactant intactId="EBI-2826276">
        <id>P34810</id>
    </interactant>
    <interactant intactId="EBI-11749983">
        <id>Q9UHP7-3</id>
        <label>CLEC2D</label>
    </interactant>
    <organismsDiffer>false</organismsDiffer>
    <experiments>3</experiments>
</comment>
<comment type="interaction">
    <interactant intactId="EBI-2826276">
        <id>P34810</id>
    </interactant>
    <interactant intactId="EBI-12007212">
        <id>Q86UP2-3</id>
        <label>KTN1</label>
    </interactant>
    <organismsDiffer>false</organismsDiffer>
    <experiments>3</experiments>
</comment>
<comment type="interaction">
    <interactant intactId="EBI-2826276">
        <id>P34810</id>
    </interactant>
    <interactant intactId="EBI-944295">
        <id>Q969L2</id>
        <label>MAL2</label>
    </interactant>
    <organismsDiffer>false</organismsDiffer>
    <experiments>3</experiments>
</comment>
<comment type="interaction">
    <interactant intactId="EBI-2826276">
        <id>P34810</id>
    </interactant>
    <interactant intactId="EBI-17263240">
        <id>P15941-11</id>
        <label>MUC1</label>
    </interactant>
    <organismsDiffer>false</organismsDiffer>
    <experiments>3</experiments>
</comment>
<comment type="interaction">
    <interactant intactId="EBI-2826276">
        <id>P34810</id>
    </interactant>
    <interactant intactId="EBI-373552">
        <id>Q96CS7</id>
        <label>PLEKHB2</label>
    </interactant>
    <organismsDiffer>false</organismsDiffer>
    <experiments>3</experiments>
</comment>
<comment type="interaction">
    <interactant intactId="EBI-2826276">
        <id>P34810</id>
    </interactant>
    <interactant intactId="EBI-744081">
        <id>Q96EQ0</id>
        <label>SGTB</label>
    </interactant>
    <organismsDiffer>false</organismsDiffer>
    <experiments>3</experiments>
</comment>
<comment type="interaction">
    <interactant intactId="EBI-2826276">
        <id>P34810</id>
    </interactant>
    <interactant intactId="EBI-11724423">
        <id>Q7Z7N9</id>
        <label>TMEM179B</label>
    </interactant>
    <organismsDiffer>false</organismsDiffer>
    <experiments>3</experiments>
</comment>
<comment type="interaction">
    <interactant intactId="EBI-2826276">
        <id>P34810</id>
    </interactant>
    <interactant intactId="EBI-10826510">
        <id>Q96B49</id>
        <label>TOMM6</label>
    </interactant>
    <organismsDiffer>false</organismsDiffer>
    <experiments>6</experiments>
</comment>
<comment type="subcellular location">
    <molecule>Isoform Short</molecule>
    <subcellularLocation>
        <location>Cell membrane</location>
        <topology>Single-pass type I membrane protein</topology>
    </subcellularLocation>
</comment>
<comment type="subcellular location">
    <molecule>Isoform Long</molecule>
    <subcellularLocation>
        <location>Endosome membrane</location>
        <topology>Single-pass type I membrane protein</topology>
    </subcellularLocation>
    <subcellularLocation>
        <location>Lysosome membrane</location>
        <topology>Single-pass type I membrane protein</topology>
    </subcellularLocation>
</comment>
<comment type="alternative products">
    <event type="alternative splicing"/>
    <isoform>
        <id>P34810-1</id>
        <name>Long</name>
        <name>CD68.1</name>
        <sequence type="displayed"/>
    </isoform>
    <isoform>
        <id>P34810-2</id>
        <name>Short</name>
        <name>CD68.2</name>
        <sequence type="described" ref="VSP_003041 VSP_003042"/>
    </isoform>
    <isoform>
        <id>P34810-3</id>
        <name>3</name>
        <sequence type="described" ref="VSP_003041"/>
    </isoform>
</comment>
<comment type="tissue specificity">
    <text evidence="5">Highly expressed by blood monocytes and tissue macrophages. Also expressed in lymphocytes, fibroblasts and endothelial cells. Expressed in many tumor cell lines which could allow them to attach to selectins on vascular endothelium, facilitating their dissemination to secondary sites.</text>
</comment>
<comment type="PTM">
    <text evidence="4 6">N- and O-glycosylated.</text>
</comment>
<comment type="similarity">
    <text evidence="2">Belongs to the LAMP family.</text>
</comment>
<comment type="caution">
    <text evidence="10">CD68 is a commonly used marker for macrophages. However, a number of studies (PubMed:15194571, PubMed:15647451, PubMed:18405323) have shown that CD68 antibodies react with other hematopoietic and non-hematopoietic cell types, suggesting that CD68 may not be a macrophage-specific antigen.</text>
</comment>
<keyword id="KW-0025">Alternative splicing</keyword>
<keyword id="KW-1003">Cell membrane</keyword>
<keyword id="KW-1015">Disulfide bond</keyword>
<keyword id="KW-0967">Endosome</keyword>
<keyword id="KW-0325">Glycoprotein</keyword>
<keyword id="KW-0458">Lysosome</keyword>
<keyword id="KW-0472">Membrane</keyword>
<keyword id="KW-1267">Proteomics identification</keyword>
<keyword id="KW-1185">Reference proteome</keyword>
<keyword id="KW-0677">Repeat</keyword>
<keyword id="KW-0732">Signal</keyword>
<keyword id="KW-0812">Transmembrane</keyword>
<keyword id="KW-1133">Transmembrane helix</keyword>
<protein>
    <recommendedName>
        <fullName>Macrosialin</fullName>
    </recommendedName>
    <alternativeName>
        <fullName>Gp110</fullName>
    </alternativeName>
    <cdAntigenName>CD68</cdAntigenName>
</protein>
<name>CD68_HUMAN</name>
<feature type="signal peptide" evidence="1">
    <location>
        <begin position="1"/>
        <end position="21"/>
    </location>
</feature>
<feature type="chain" id="PRO_0000017102" description="Macrosialin">
    <location>
        <begin position="22"/>
        <end position="354"/>
    </location>
</feature>
<feature type="topological domain" description="Extracellular" evidence="1">
    <location>
        <begin position="22"/>
        <end position="319"/>
    </location>
</feature>
<feature type="transmembrane region" description="Helical" evidence="2">
    <location>
        <begin position="320"/>
        <end position="344"/>
    </location>
</feature>
<feature type="topological domain" description="Cytoplasmic" evidence="2">
    <location>
        <begin position="345"/>
        <end position="354"/>
    </location>
</feature>
<feature type="repeat" description="1">
    <location>
        <begin position="70"/>
        <end position="99"/>
    </location>
</feature>
<feature type="repeat" description="2">
    <location>
        <begin position="100"/>
        <end position="129"/>
    </location>
</feature>
<feature type="region of interest" description="Mucin-like">
    <location>
        <begin position="23"/>
        <end position="140"/>
    </location>
</feature>
<feature type="region of interest" description="Disordered" evidence="3">
    <location>
        <begin position="40"/>
        <end position="162"/>
    </location>
</feature>
<feature type="region of interest" description="2 X 30 AA tandem repeats">
    <location>
        <begin position="70"/>
        <end position="129"/>
    </location>
</feature>
<feature type="compositionally biased region" description="Low complexity" evidence="3">
    <location>
        <begin position="40"/>
        <end position="51"/>
    </location>
</feature>
<feature type="compositionally biased region" description="Basic residues" evidence="3">
    <location>
        <begin position="52"/>
        <end position="61"/>
    </location>
</feature>
<feature type="compositionally biased region" description="Low complexity" evidence="3">
    <location>
        <begin position="62"/>
        <end position="84"/>
    </location>
</feature>
<feature type="compositionally biased region" description="Polar residues" evidence="3">
    <location>
        <begin position="85"/>
        <end position="102"/>
    </location>
</feature>
<feature type="compositionally biased region" description="Low complexity" evidence="3">
    <location>
        <begin position="103"/>
        <end position="117"/>
    </location>
</feature>
<feature type="compositionally biased region" description="Polar residues" evidence="3">
    <location>
        <begin position="121"/>
        <end position="135"/>
    </location>
</feature>
<feature type="compositionally biased region" description="Pro residues" evidence="3">
    <location>
        <begin position="140"/>
        <end position="150"/>
    </location>
</feature>
<feature type="glycosylation site" description="N-linked (GlcNAc...) asparagine" evidence="1">
    <location>
        <position position="88"/>
    </location>
</feature>
<feature type="glycosylation site" description="N-linked (GlcNAc...) asparagine" evidence="1">
    <location>
        <position position="96"/>
    </location>
</feature>
<feature type="glycosylation site" description="N-linked (GlcNAc...) asparagine" evidence="1">
    <location>
        <position position="118"/>
    </location>
</feature>
<feature type="glycosylation site" description="N-linked (GlcNAc...) asparagine" evidence="1">
    <location>
        <position position="126"/>
    </location>
</feature>
<feature type="glycosylation site" description="N-linked (GlcNAc...) asparagine" evidence="1">
    <location>
        <position position="164"/>
    </location>
</feature>
<feature type="glycosylation site" description="N-linked (GlcNAc...) asparagine" evidence="6">
    <location>
        <position position="199"/>
    </location>
</feature>
<feature type="glycosylation site" description="N-linked (GlcNAc...) asparagine" evidence="1">
    <location>
        <position position="246"/>
    </location>
</feature>
<feature type="glycosylation site" description="N-linked (GlcNAc...) asparagine" evidence="4 6">
    <location>
        <position position="261"/>
    </location>
</feature>
<feature type="glycosylation site" description="N-linked (GlcNAc...) asparagine" evidence="6">
    <location>
        <position position="279"/>
    </location>
</feature>
<feature type="disulfide bond" evidence="2">
    <location>
        <begin position="169"/>
        <end position="207"/>
    </location>
</feature>
<feature type="disulfide bond" evidence="2">
    <location>
        <begin position="277"/>
        <end position="314"/>
    </location>
</feature>
<feature type="splice variant" id="VSP_003041" description="In isoform Short and isoform 3." evidence="8 9">
    <location>
        <begin position="17"/>
        <end position="43"/>
    </location>
</feature>
<feature type="splice variant" id="VSP_003042" description="In isoform Short." evidence="9">
    <location>
        <begin position="83"/>
        <end position="112"/>
    </location>
</feature>
<feature type="sequence variant" id="VAR_016144" description="In dbSNP:rs9901673." evidence="7">
    <original>Q</original>
    <variation>K</variation>
    <location>
        <position position="254"/>
    </location>
</feature>
<feature type="sequence variant" id="VAR_049725" description="In dbSNP:rs35452170.">
    <original>I</original>
    <variation>T</variation>
    <location>
        <position position="329"/>
    </location>
</feature>
<feature type="sequence variant" id="VAR_016145" description="In dbSNP:rs17607.">
    <original>A</original>
    <variation>T</variation>
    <location>
        <position position="340"/>
    </location>
</feature>
<feature type="sequence variant" id="VAR_049726" description="In dbSNP:rs9901675.">
    <original>A</original>
    <variation>T</variation>
    <location>
        <position position="350"/>
    </location>
</feature>
<feature type="sequence conflict" description="In Ref. 4; BAD96234." evidence="10" ref="4">
    <original>S</original>
    <variation>G</variation>
    <location>
        <position position="95"/>
    </location>
</feature>
<accession>P34810</accession>
<accession>B4DVT4</accession>
<accession>Q53HR6</accession>
<accession>Q53XI3</accession>
<accession>Q96BI7</accession>
<evidence type="ECO:0000255" key="1"/>
<evidence type="ECO:0000255" key="2">
    <source>
        <dbReference type="PROSITE-ProRule" id="PRU00740"/>
    </source>
</evidence>
<evidence type="ECO:0000256" key="3">
    <source>
        <dbReference type="SAM" id="MobiDB-lite"/>
    </source>
</evidence>
<evidence type="ECO:0000269" key="4">
    <source>
    </source>
</evidence>
<evidence type="ECO:0000269" key="5">
    <source>
    </source>
</evidence>
<evidence type="ECO:0000269" key="6">
    <source>
    </source>
</evidence>
<evidence type="ECO:0000269" key="7">
    <source>
    </source>
</evidence>
<evidence type="ECO:0000303" key="8">
    <source>
    </source>
</evidence>
<evidence type="ECO:0000303" key="9">
    <source>
    </source>
</evidence>
<evidence type="ECO:0000305" key="10"/>
<gene>
    <name type="primary">CD68</name>
</gene>
<reference key="1">
    <citation type="journal article" date="1993" name="Blood">
        <title>Molecular cloning of CD68, a human macrophage marker related to lysosomal glycoproteins.</title>
        <authorList>
            <person name="Holness C.L."/>
            <person name="Simmons D.L."/>
        </authorList>
    </citation>
    <scope>NUCLEOTIDE SEQUENCE [MRNA] (ISOFORMS LONG AND SHORT)</scope>
    <scope>VARIANT LYS-254</scope>
</reference>
<reference key="2">
    <citation type="submission" date="2003-07" db="EMBL/GenBank/DDBJ databases">
        <title>Cloning of human full-length CDSs in BD Creator(TM) system donor vector.</title>
        <authorList>
            <person name="Kalnine N."/>
            <person name="Chen X."/>
            <person name="Rolfs A."/>
            <person name="Halleck A."/>
            <person name="Hines L."/>
            <person name="Eisenstein S."/>
            <person name="Koundinya M."/>
            <person name="Raphael J."/>
            <person name="Moreira D."/>
            <person name="Kelley T."/>
            <person name="LaBaer J."/>
            <person name="Lin Y."/>
            <person name="Phelan M."/>
            <person name="Farmer A."/>
        </authorList>
    </citation>
    <scope>NUCLEOTIDE SEQUENCE [LARGE SCALE MRNA] (ISOFORM LONG)</scope>
</reference>
<reference key="3">
    <citation type="journal article" date="2004" name="Nat. Genet.">
        <title>Complete sequencing and characterization of 21,243 full-length human cDNAs.</title>
        <authorList>
            <person name="Ota T."/>
            <person name="Suzuki Y."/>
            <person name="Nishikawa T."/>
            <person name="Otsuki T."/>
            <person name="Sugiyama T."/>
            <person name="Irie R."/>
            <person name="Wakamatsu A."/>
            <person name="Hayashi K."/>
            <person name="Sato H."/>
            <person name="Nagai K."/>
            <person name="Kimura K."/>
            <person name="Makita H."/>
            <person name="Sekine M."/>
            <person name="Obayashi M."/>
            <person name="Nishi T."/>
            <person name="Shibahara T."/>
            <person name="Tanaka T."/>
            <person name="Ishii S."/>
            <person name="Yamamoto J."/>
            <person name="Saito K."/>
            <person name="Kawai Y."/>
            <person name="Isono Y."/>
            <person name="Nakamura Y."/>
            <person name="Nagahari K."/>
            <person name="Murakami K."/>
            <person name="Yasuda T."/>
            <person name="Iwayanagi T."/>
            <person name="Wagatsuma M."/>
            <person name="Shiratori A."/>
            <person name="Sudo H."/>
            <person name="Hosoiri T."/>
            <person name="Kaku Y."/>
            <person name="Kodaira H."/>
            <person name="Kondo H."/>
            <person name="Sugawara M."/>
            <person name="Takahashi M."/>
            <person name="Kanda K."/>
            <person name="Yokoi T."/>
            <person name="Furuya T."/>
            <person name="Kikkawa E."/>
            <person name="Omura Y."/>
            <person name="Abe K."/>
            <person name="Kamihara K."/>
            <person name="Katsuta N."/>
            <person name="Sato K."/>
            <person name="Tanikawa M."/>
            <person name="Yamazaki M."/>
            <person name="Ninomiya K."/>
            <person name="Ishibashi T."/>
            <person name="Yamashita H."/>
            <person name="Murakawa K."/>
            <person name="Fujimori K."/>
            <person name="Tanai H."/>
            <person name="Kimata M."/>
            <person name="Watanabe M."/>
            <person name="Hiraoka S."/>
            <person name="Chiba Y."/>
            <person name="Ishida S."/>
            <person name="Ono Y."/>
            <person name="Takiguchi S."/>
            <person name="Watanabe S."/>
            <person name="Yosida M."/>
            <person name="Hotuta T."/>
            <person name="Kusano J."/>
            <person name="Kanehori K."/>
            <person name="Takahashi-Fujii A."/>
            <person name="Hara H."/>
            <person name="Tanase T.-O."/>
            <person name="Nomura Y."/>
            <person name="Togiya S."/>
            <person name="Komai F."/>
            <person name="Hara R."/>
            <person name="Takeuchi K."/>
            <person name="Arita M."/>
            <person name="Imose N."/>
            <person name="Musashino K."/>
            <person name="Yuuki H."/>
            <person name="Oshima A."/>
            <person name="Sasaki N."/>
            <person name="Aotsuka S."/>
            <person name="Yoshikawa Y."/>
            <person name="Matsunawa H."/>
            <person name="Ichihara T."/>
            <person name="Shiohata N."/>
            <person name="Sano S."/>
            <person name="Moriya S."/>
            <person name="Momiyama H."/>
            <person name="Satoh N."/>
            <person name="Takami S."/>
            <person name="Terashima Y."/>
            <person name="Suzuki O."/>
            <person name="Nakagawa S."/>
            <person name="Senoh A."/>
            <person name="Mizoguchi H."/>
            <person name="Goto Y."/>
            <person name="Shimizu F."/>
            <person name="Wakebe H."/>
            <person name="Hishigaki H."/>
            <person name="Watanabe T."/>
            <person name="Sugiyama A."/>
            <person name="Takemoto M."/>
            <person name="Kawakami B."/>
            <person name="Yamazaki M."/>
            <person name="Watanabe K."/>
            <person name="Kumagai A."/>
            <person name="Itakura S."/>
            <person name="Fukuzumi Y."/>
            <person name="Fujimori Y."/>
            <person name="Komiyama M."/>
            <person name="Tashiro H."/>
            <person name="Tanigami A."/>
            <person name="Fujiwara T."/>
            <person name="Ono T."/>
            <person name="Yamada K."/>
            <person name="Fujii Y."/>
            <person name="Ozaki K."/>
            <person name="Hirao M."/>
            <person name="Ohmori Y."/>
            <person name="Kawabata A."/>
            <person name="Hikiji T."/>
            <person name="Kobatake N."/>
            <person name="Inagaki H."/>
            <person name="Ikema Y."/>
            <person name="Okamoto S."/>
            <person name="Okitani R."/>
            <person name="Kawakami T."/>
            <person name="Noguchi S."/>
            <person name="Itoh T."/>
            <person name="Shigeta K."/>
            <person name="Senba T."/>
            <person name="Matsumura K."/>
            <person name="Nakajima Y."/>
            <person name="Mizuno T."/>
            <person name="Morinaga M."/>
            <person name="Sasaki M."/>
            <person name="Togashi T."/>
            <person name="Oyama M."/>
            <person name="Hata H."/>
            <person name="Watanabe M."/>
            <person name="Komatsu T."/>
            <person name="Mizushima-Sugano J."/>
            <person name="Satoh T."/>
            <person name="Shirai Y."/>
            <person name="Takahashi Y."/>
            <person name="Nakagawa K."/>
            <person name="Okumura K."/>
            <person name="Nagase T."/>
            <person name="Nomura N."/>
            <person name="Kikuchi H."/>
            <person name="Masuho Y."/>
            <person name="Yamashita R."/>
            <person name="Nakai K."/>
            <person name="Yada T."/>
            <person name="Nakamura Y."/>
            <person name="Ohara O."/>
            <person name="Isogai T."/>
            <person name="Sugano S."/>
        </authorList>
    </citation>
    <scope>NUCLEOTIDE SEQUENCE [LARGE SCALE MRNA] (ISOFORMS LONG AND 3)</scope>
    <source>
        <tissue>Spleen</tissue>
        <tissue>Umbilical cord blood</tissue>
    </source>
</reference>
<reference key="4">
    <citation type="submission" date="2005-04" db="EMBL/GenBank/DDBJ databases">
        <authorList>
            <person name="Suzuki Y."/>
            <person name="Sugano S."/>
            <person name="Totoki Y."/>
            <person name="Toyoda A."/>
            <person name="Takeda T."/>
            <person name="Sakaki Y."/>
            <person name="Tanaka A."/>
            <person name="Yokoyama S."/>
        </authorList>
    </citation>
    <scope>NUCLEOTIDE SEQUENCE [LARGE SCALE MRNA] (ISOFORM LONG)</scope>
    <source>
        <tissue>Adipose tissue</tissue>
    </source>
</reference>
<reference key="5">
    <citation type="journal article" date="2006" name="Nature">
        <title>DNA sequence of human chromosome 17 and analysis of rearrangement in the human lineage.</title>
        <authorList>
            <person name="Zody M.C."/>
            <person name="Garber M."/>
            <person name="Adams D.J."/>
            <person name="Sharpe T."/>
            <person name="Harrow J."/>
            <person name="Lupski J.R."/>
            <person name="Nicholson C."/>
            <person name="Searle S.M."/>
            <person name="Wilming L."/>
            <person name="Young S.K."/>
            <person name="Abouelleil A."/>
            <person name="Allen N.R."/>
            <person name="Bi W."/>
            <person name="Bloom T."/>
            <person name="Borowsky M.L."/>
            <person name="Bugalter B.E."/>
            <person name="Butler J."/>
            <person name="Chang J.L."/>
            <person name="Chen C.-K."/>
            <person name="Cook A."/>
            <person name="Corum B."/>
            <person name="Cuomo C.A."/>
            <person name="de Jong P.J."/>
            <person name="DeCaprio D."/>
            <person name="Dewar K."/>
            <person name="FitzGerald M."/>
            <person name="Gilbert J."/>
            <person name="Gibson R."/>
            <person name="Gnerre S."/>
            <person name="Goldstein S."/>
            <person name="Grafham D.V."/>
            <person name="Grocock R."/>
            <person name="Hafez N."/>
            <person name="Hagopian D.S."/>
            <person name="Hart E."/>
            <person name="Norman C.H."/>
            <person name="Humphray S."/>
            <person name="Jaffe D.B."/>
            <person name="Jones M."/>
            <person name="Kamal M."/>
            <person name="Khodiyar V.K."/>
            <person name="LaButti K."/>
            <person name="Laird G."/>
            <person name="Lehoczky J."/>
            <person name="Liu X."/>
            <person name="Lokyitsang T."/>
            <person name="Loveland J."/>
            <person name="Lui A."/>
            <person name="Macdonald P."/>
            <person name="Major J.E."/>
            <person name="Matthews L."/>
            <person name="Mauceli E."/>
            <person name="McCarroll S.A."/>
            <person name="Mihalev A.H."/>
            <person name="Mudge J."/>
            <person name="Nguyen C."/>
            <person name="Nicol R."/>
            <person name="O'Leary S.B."/>
            <person name="Osoegawa K."/>
            <person name="Schwartz D.C."/>
            <person name="Shaw-Smith C."/>
            <person name="Stankiewicz P."/>
            <person name="Steward C."/>
            <person name="Swarbreck D."/>
            <person name="Venkataraman V."/>
            <person name="Whittaker C.A."/>
            <person name="Yang X."/>
            <person name="Zimmer A.R."/>
            <person name="Bradley A."/>
            <person name="Hubbard T."/>
            <person name="Birren B.W."/>
            <person name="Rogers J."/>
            <person name="Lander E.S."/>
            <person name="Nusbaum C."/>
        </authorList>
    </citation>
    <scope>NUCLEOTIDE SEQUENCE [LARGE SCALE GENOMIC DNA]</scope>
</reference>
<reference key="6">
    <citation type="submission" date="2005-09" db="EMBL/GenBank/DDBJ databases">
        <authorList>
            <person name="Mural R.J."/>
            <person name="Istrail S."/>
            <person name="Sutton G.G."/>
            <person name="Florea L."/>
            <person name="Halpern A.L."/>
            <person name="Mobarry C.M."/>
            <person name="Lippert R."/>
            <person name="Walenz B."/>
            <person name="Shatkay H."/>
            <person name="Dew I."/>
            <person name="Miller J.R."/>
            <person name="Flanigan M.J."/>
            <person name="Edwards N.J."/>
            <person name="Bolanos R."/>
            <person name="Fasulo D."/>
            <person name="Halldorsson B.V."/>
            <person name="Hannenhalli S."/>
            <person name="Turner R."/>
            <person name="Yooseph S."/>
            <person name="Lu F."/>
            <person name="Nusskern D.R."/>
            <person name="Shue B.C."/>
            <person name="Zheng X.H."/>
            <person name="Zhong F."/>
            <person name="Delcher A.L."/>
            <person name="Huson D.H."/>
            <person name="Kravitz S.A."/>
            <person name="Mouchard L."/>
            <person name="Reinert K."/>
            <person name="Remington K.A."/>
            <person name="Clark A.G."/>
            <person name="Waterman M.S."/>
            <person name="Eichler E.E."/>
            <person name="Adams M.D."/>
            <person name="Hunkapiller M.W."/>
            <person name="Myers E.W."/>
            <person name="Venter J.C."/>
        </authorList>
    </citation>
    <scope>NUCLEOTIDE SEQUENCE [LARGE SCALE GENOMIC DNA]</scope>
</reference>
<reference key="7">
    <citation type="journal article" date="2004" name="Genome Res.">
        <title>The status, quality, and expansion of the NIH full-length cDNA project: the Mammalian Gene Collection (MGC).</title>
        <authorList>
            <consortium name="The MGC Project Team"/>
        </authorList>
    </citation>
    <scope>NUCLEOTIDE SEQUENCE [LARGE SCALE MRNA] (ISOFORM LONG)</scope>
    <source>
        <tissue>Skin</tissue>
    </source>
</reference>
<reference key="8">
    <citation type="journal article" date="1998" name="Genomics">
        <title>The linked human elongation initiation factor 4A1 (EIF4A1) and CD68 genes map to chromosome 17p13.</title>
        <authorList>
            <person name="Jones E."/>
            <person name="Quinn C.M."/>
            <person name="See C.G."/>
            <person name="Montgomery D.S."/>
            <person name="Ford M.J."/>
            <person name="Koelble K."/>
            <person name="Gordon S."/>
            <person name="Greaves D.R."/>
        </authorList>
    </citation>
    <scope>NUCLEOTIDE SEQUENCE [GENOMIC DNA] OF 1-28</scope>
</reference>
<reference key="9">
    <citation type="journal article" date="2004" name="Ann. Rheum. Dis.">
        <title>Macrophage specificity of three anti-CD68 monoclonal antibodies (KP1, EBM11, and PGM1) widely used for immunohistochemistry and flow cytometry.</title>
        <authorList>
            <person name="Kunisch E."/>
            <person name="Fuhrmann R."/>
            <person name="Roth A."/>
            <person name="Winter R."/>
            <person name="Lungershausen W."/>
            <person name="Kinne R.W."/>
        </authorList>
    </citation>
    <scope>USE AS A MACROPHAGE MARKER</scope>
</reference>
<reference key="10">
    <citation type="journal article" date="2005" name="Ann. Rheum. Dis.">
        <title>CD68 is not a macrophage-specific antigen.</title>
        <authorList>
            <person name="Beranek J.T."/>
        </authorList>
    </citation>
    <scope>USE AS A MACROPHAGE MARKER</scope>
</reference>
<reference key="11">
    <citation type="journal article" date="2006" name="Mol. Cell. Proteomics">
        <title>Elucidation of N-glycosylation sites on human platelet proteins: a glycoproteomic approach.</title>
        <authorList>
            <person name="Lewandrowski U."/>
            <person name="Moebius J."/>
            <person name="Walter U."/>
            <person name="Sickmann A."/>
        </authorList>
    </citation>
    <scope>GLYCOSYLATION [LARGE SCALE ANALYSIS] AT ASN-261</scope>
    <source>
        <tissue>Platelet</tissue>
    </source>
</reference>
<reference key="12">
    <citation type="journal article" date="2008" name="Scand. J. Immunol.">
        <title>Expression of CD68 in non-myeloid cell types.</title>
        <authorList>
            <person name="Gottfried E."/>
            <person name="Kunz-Schughart L.A."/>
            <person name="Weber A."/>
            <person name="Rehli M."/>
            <person name="Peuker A."/>
            <person name="Muller A."/>
            <person name="Kastenberger M."/>
            <person name="Brockhoff G."/>
            <person name="Andreesen R."/>
            <person name="Kreutz M."/>
        </authorList>
    </citation>
    <scope>TISSUE SPECIFICITY</scope>
</reference>
<reference key="13">
    <citation type="journal article" date="2009" name="J. Proteome Res.">
        <title>Glycoproteomics analysis of human liver tissue by combination of multiple enzyme digestion and hydrazide chemistry.</title>
        <authorList>
            <person name="Chen R."/>
            <person name="Jiang X."/>
            <person name="Sun D."/>
            <person name="Han G."/>
            <person name="Wang F."/>
            <person name="Ye M."/>
            <person name="Wang L."/>
            <person name="Zou H."/>
        </authorList>
    </citation>
    <scope>GLYCOSYLATION [LARGE SCALE ANALYSIS] AT ASN-199; ASN-261 AND ASN-279</scope>
    <source>
        <tissue>Liver</tissue>
    </source>
</reference>
<reference key="14">
    <citation type="journal article" date="2015" name="Proteomics">
        <title>N-terminome analysis of the human mitochondrial proteome.</title>
        <authorList>
            <person name="Vaca Jacome A.S."/>
            <person name="Rabilloud T."/>
            <person name="Schaeffer-Reiss C."/>
            <person name="Rompais M."/>
            <person name="Ayoub D."/>
            <person name="Lane L."/>
            <person name="Bairoch A."/>
            <person name="Van Dorsselaer A."/>
            <person name="Carapito C."/>
        </authorList>
    </citation>
    <scope>IDENTIFICATION BY MASS SPECTROMETRY [LARGE SCALE ANALYSIS]</scope>
</reference>
<sequence>MRLAVLFSGALLGLLAAQGTGNDCPHKKSATLLPSFTVTPTVTESTGTTSHRTTKSHKTTTHRTTTTGTTSHGPTTATHNPTTTSHGNVTVHPTSNSTATSQGPSTATHSPATTSHGNATVHPTSNSTATSPGFTSSAHPEPPPPSPSPSPTSKETIGDYTWTNGSQPCVHLQAQIQIRVMYTTQGGGEAWGISVLNPNKTKVQGSCEGAHPHLLLSFPYGHLSFGFMQDLQQKVVYLSYMAVEYNVSFPHAAQWTFSAQNASLRDLQAPLGQSFSCSNSSIILSPAVHLDLLSLRLQAAQLPHTGVFGQSFSCPSDRSILLPLIIGLILLGLLALVLIAFCIIRRRPSAYQAL</sequence>
<dbReference type="EMBL" id="S57235">
    <property type="protein sequence ID" value="AAB25811.1"/>
    <property type="molecule type" value="mRNA"/>
</dbReference>
<dbReference type="EMBL" id="BT009923">
    <property type="protein sequence ID" value="AAP88925.1"/>
    <property type="molecule type" value="mRNA"/>
</dbReference>
<dbReference type="EMBL" id="AK290238">
    <property type="protein sequence ID" value="BAF82927.1"/>
    <property type="molecule type" value="mRNA"/>
</dbReference>
<dbReference type="EMBL" id="AK222492">
    <property type="protein sequence ID" value="BAD96212.1"/>
    <property type="molecule type" value="mRNA"/>
</dbReference>
<dbReference type="EMBL" id="AK222514">
    <property type="protein sequence ID" value="BAD96234.1"/>
    <property type="molecule type" value="mRNA"/>
</dbReference>
<dbReference type="EMBL" id="AK301223">
    <property type="protein sequence ID" value="BAG62796.1"/>
    <property type="molecule type" value="mRNA"/>
</dbReference>
<dbReference type="EMBL" id="AC016876">
    <property type="status" value="NOT_ANNOTATED_CDS"/>
    <property type="molecule type" value="Genomic_DNA"/>
</dbReference>
<dbReference type="EMBL" id="CH471108">
    <property type="protein sequence ID" value="EAW90165.1"/>
    <property type="molecule type" value="Genomic_DNA"/>
</dbReference>
<dbReference type="EMBL" id="BC015557">
    <property type="protein sequence ID" value="AAH15557.1"/>
    <property type="molecule type" value="mRNA"/>
</dbReference>
<dbReference type="EMBL" id="AF060540">
    <property type="protein sequence ID" value="AAC70006.1"/>
    <property type="molecule type" value="Genomic_DNA"/>
</dbReference>
<dbReference type="CCDS" id="CCDS11114.1">
    <molecule id="P34810-1"/>
</dbReference>
<dbReference type="CCDS" id="CCDS58512.1">
    <molecule id="P34810-3"/>
</dbReference>
<dbReference type="PIR" id="A48931">
    <property type="entry name" value="A48931"/>
</dbReference>
<dbReference type="RefSeq" id="NP_001035148.1">
    <molecule id="P34810-3"/>
    <property type="nucleotide sequence ID" value="NM_001040059.2"/>
</dbReference>
<dbReference type="RefSeq" id="NP_001242.2">
    <molecule id="P34810-1"/>
    <property type="nucleotide sequence ID" value="NM_001251.3"/>
</dbReference>
<dbReference type="SMR" id="P34810"/>
<dbReference type="BioGRID" id="107406">
    <property type="interactions" value="30"/>
</dbReference>
<dbReference type="FunCoup" id="P34810">
    <property type="interactions" value="248"/>
</dbReference>
<dbReference type="IntAct" id="P34810">
    <property type="interactions" value="28"/>
</dbReference>
<dbReference type="MINT" id="P34810"/>
<dbReference type="STRING" id="9606.ENSP00000250092"/>
<dbReference type="GlyConnect" id="1483">
    <property type="glycosylation" value="17 N-Linked glycans (2 sites)"/>
</dbReference>
<dbReference type="GlyCosmos" id="P34810">
    <property type="glycosylation" value="10 sites, 17 glycans"/>
</dbReference>
<dbReference type="GlyGen" id="P34810">
    <property type="glycosylation" value="13 sites, 61 N-linked glycans (3 sites), 2 O-linked glycans (4 sites)"/>
</dbReference>
<dbReference type="iPTMnet" id="P34810"/>
<dbReference type="PhosphoSitePlus" id="P34810"/>
<dbReference type="BioMuta" id="CD68"/>
<dbReference type="DMDM" id="147744552"/>
<dbReference type="jPOST" id="P34810"/>
<dbReference type="MassIVE" id="P34810"/>
<dbReference type="PaxDb" id="9606-ENSP00000250092"/>
<dbReference type="PeptideAtlas" id="P34810"/>
<dbReference type="ProteomicsDB" id="54942">
    <molecule id="P34810-1"/>
</dbReference>
<dbReference type="ProteomicsDB" id="54943">
    <molecule id="P34810-2"/>
</dbReference>
<dbReference type="Antibodypedia" id="3511">
    <property type="antibodies" value="2517 antibodies from 56 providers"/>
</dbReference>
<dbReference type="DNASU" id="968"/>
<dbReference type="Ensembl" id="ENST00000250092.11">
    <molecule id="P34810-1"/>
    <property type="protein sequence ID" value="ENSP00000250092.6"/>
    <property type="gene ID" value="ENSG00000129226.14"/>
</dbReference>
<dbReference type="Ensembl" id="ENST00000380498.10">
    <molecule id="P34810-3"/>
    <property type="protein sequence ID" value="ENSP00000369867.6"/>
    <property type="gene ID" value="ENSG00000129226.14"/>
</dbReference>
<dbReference type="GeneID" id="968"/>
<dbReference type="KEGG" id="hsa:968"/>
<dbReference type="MANE-Select" id="ENST00000250092.11">
    <property type="protein sequence ID" value="ENSP00000250092.6"/>
    <property type="RefSeq nucleotide sequence ID" value="NM_001251.3"/>
    <property type="RefSeq protein sequence ID" value="NP_001242.2"/>
</dbReference>
<dbReference type="UCSC" id="uc002ghu.4">
    <molecule id="P34810-1"/>
    <property type="organism name" value="human"/>
</dbReference>
<dbReference type="AGR" id="HGNC:1693"/>
<dbReference type="CTD" id="968"/>
<dbReference type="DisGeNET" id="968"/>
<dbReference type="GeneCards" id="CD68"/>
<dbReference type="HGNC" id="HGNC:1693">
    <property type="gene designation" value="CD68"/>
</dbReference>
<dbReference type="HPA" id="ENSG00000129226">
    <property type="expression patterns" value="Tissue enhanced (lung, lymphoid tissue)"/>
</dbReference>
<dbReference type="MIM" id="153634">
    <property type="type" value="gene"/>
</dbReference>
<dbReference type="neXtProt" id="NX_P34810"/>
<dbReference type="OpenTargets" id="ENSG00000129226"/>
<dbReference type="PharmGKB" id="PA26232"/>
<dbReference type="VEuPathDB" id="HostDB:ENSG00000129226"/>
<dbReference type="eggNOG" id="KOG4818">
    <property type="taxonomic scope" value="Eukaryota"/>
</dbReference>
<dbReference type="GeneTree" id="ENSGT00950000182899"/>
<dbReference type="HOGENOM" id="CLU_071610_0_0_1"/>
<dbReference type="InParanoid" id="P34810"/>
<dbReference type="OMA" id="TTKHPNT"/>
<dbReference type="OrthoDB" id="9428839at2759"/>
<dbReference type="PAN-GO" id="P34810">
    <property type="GO annotations" value="4 GO annotations based on evolutionary models"/>
</dbReference>
<dbReference type="PhylomeDB" id="P34810"/>
<dbReference type="TreeFam" id="TF316339"/>
<dbReference type="PathwayCommons" id="P34810"/>
<dbReference type="Reactome" id="R-HSA-6798695">
    <property type="pathway name" value="Neutrophil degranulation"/>
</dbReference>
<dbReference type="SignaLink" id="P34810"/>
<dbReference type="SIGNOR" id="P34810"/>
<dbReference type="BioGRID-ORCS" id="968">
    <property type="hits" value="12 hits in 1159 CRISPR screens"/>
</dbReference>
<dbReference type="ChiTaRS" id="CD68">
    <property type="organism name" value="human"/>
</dbReference>
<dbReference type="GenomeRNAi" id="968"/>
<dbReference type="Pharos" id="P34810">
    <property type="development level" value="Tbio"/>
</dbReference>
<dbReference type="PRO" id="PR:P34810"/>
<dbReference type="Proteomes" id="UP000005640">
    <property type="component" value="Chromosome 17"/>
</dbReference>
<dbReference type="RNAct" id="P34810">
    <property type="molecule type" value="protein"/>
</dbReference>
<dbReference type="Bgee" id="ENSG00000129226">
    <property type="expression patterns" value="Expressed in leukocyte and 104 other cell types or tissues"/>
</dbReference>
<dbReference type="ExpressionAtlas" id="P34810">
    <property type="expression patterns" value="baseline and differential"/>
</dbReference>
<dbReference type="GO" id="GO:0035577">
    <property type="term" value="C:azurophil granule membrane"/>
    <property type="evidence" value="ECO:0000304"/>
    <property type="project" value="Reactome"/>
</dbReference>
<dbReference type="GO" id="GO:0031902">
    <property type="term" value="C:late endosome membrane"/>
    <property type="evidence" value="ECO:0000318"/>
    <property type="project" value="GO_Central"/>
</dbReference>
<dbReference type="GO" id="GO:0005765">
    <property type="term" value="C:lysosomal membrane"/>
    <property type="evidence" value="ECO:0000318"/>
    <property type="project" value="GO_Central"/>
</dbReference>
<dbReference type="GO" id="GO:0005764">
    <property type="term" value="C:lysosome"/>
    <property type="evidence" value="ECO:0000250"/>
    <property type="project" value="ARUK-UCL"/>
</dbReference>
<dbReference type="GO" id="GO:0016020">
    <property type="term" value="C:membrane"/>
    <property type="evidence" value="ECO:0000304"/>
    <property type="project" value="ProtInc"/>
</dbReference>
<dbReference type="GO" id="GO:0005886">
    <property type="term" value="C:plasma membrane"/>
    <property type="evidence" value="ECO:0000314"/>
    <property type="project" value="ARUK-UCL"/>
</dbReference>
<dbReference type="GO" id="GO:0035425">
    <property type="term" value="P:autocrine signaling"/>
    <property type="evidence" value="ECO:0007669"/>
    <property type="project" value="Ensembl"/>
</dbReference>
<dbReference type="GO" id="GO:0071222">
    <property type="term" value="P:cellular response to lipopolysaccharide"/>
    <property type="evidence" value="ECO:0000250"/>
    <property type="project" value="ARUK-UCL"/>
</dbReference>
<dbReference type="GO" id="GO:0031669">
    <property type="term" value="P:cellular response to nutrient levels"/>
    <property type="evidence" value="ECO:0000250"/>
    <property type="project" value="ARUK-UCL"/>
</dbReference>
<dbReference type="GO" id="GO:0140052">
    <property type="term" value="P:cellular response to oxidised low-density lipoprotein particle stimulus"/>
    <property type="evidence" value="ECO:0000250"/>
    <property type="project" value="ARUK-UCL"/>
</dbReference>
<dbReference type="GO" id="GO:0072594">
    <property type="term" value="P:establishment of protein localization to organelle"/>
    <property type="evidence" value="ECO:0000318"/>
    <property type="project" value="GO_Central"/>
</dbReference>
<dbReference type="GO" id="GO:0002437">
    <property type="term" value="P:inflammatory response to antigenic stimulus"/>
    <property type="evidence" value="ECO:0000250"/>
    <property type="project" value="ARUK-UCL"/>
</dbReference>
<dbReference type="GO" id="GO:0002605">
    <property type="term" value="P:negative regulation of dendritic cell antigen processing and presentation"/>
    <property type="evidence" value="ECO:0000250"/>
    <property type="project" value="ARUK-UCL"/>
</dbReference>
<dbReference type="GO" id="GO:0045471">
    <property type="term" value="P:response to ethanol"/>
    <property type="evidence" value="ECO:0007669"/>
    <property type="project" value="Ensembl"/>
</dbReference>
<dbReference type="FunFam" id="2.40.160.110:FF:000007">
    <property type="entry name" value="CD68 molecule"/>
    <property type="match status" value="1"/>
</dbReference>
<dbReference type="Gene3D" id="2.40.160.110">
    <property type="match status" value="1"/>
</dbReference>
<dbReference type="InterPro" id="IPR048528">
    <property type="entry name" value="Lamp2-like_luminal"/>
</dbReference>
<dbReference type="InterPro" id="IPR018134">
    <property type="entry name" value="LAMP_CS"/>
</dbReference>
<dbReference type="InterPro" id="IPR002000">
    <property type="entry name" value="Lysosome-assoc_membr_glycop"/>
</dbReference>
<dbReference type="PANTHER" id="PTHR11506">
    <property type="entry name" value="LYSOSOME-ASSOCIATED MEMBRANE GLYCOPROTEIN"/>
    <property type="match status" value="1"/>
</dbReference>
<dbReference type="PANTHER" id="PTHR11506:SF2">
    <property type="entry name" value="MACROSIALIN"/>
    <property type="match status" value="1"/>
</dbReference>
<dbReference type="Pfam" id="PF01299">
    <property type="entry name" value="Lamp2-like_luminal"/>
    <property type="match status" value="1"/>
</dbReference>
<dbReference type="PRINTS" id="PR00336">
    <property type="entry name" value="LYSASSOCTDMP"/>
</dbReference>
<dbReference type="PROSITE" id="PS00311">
    <property type="entry name" value="LAMP_2"/>
    <property type="match status" value="1"/>
</dbReference>
<dbReference type="PROSITE" id="PS51407">
    <property type="entry name" value="LAMP_3"/>
    <property type="match status" value="1"/>
</dbReference>